<sequence length="154" mass="16661">MFGADKGTADKLDGKKLHIGIVQARFNENITNTLAAACRAELLRLGVQEKHIRHVLVPGALEVPVALQAMAERDEYDALIALGCIIRGETYHFELVANESGAGVTRLALDYQVPIANAIITTENLEQALARQTEKGVDAARVAVEMANLLEELS</sequence>
<proteinExistence type="inferred from homology"/>
<accession>A1W9I3</accession>
<reference key="1">
    <citation type="submission" date="2006-12" db="EMBL/GenBank/DDBJ databases">
        <title>Complete sequence of chromosome 1 of Acidovorax sp. JS42.</title>
        <authorList>
            <person name="Copeland A."/>
            <person name="Lucas S."/>
            <person name="Lapidus A."/>
            <person name="Barry K."/>
            <person name="Detter J.C."/>
            <person name="Glavina del Rio T."/>
            <person name="Dalin E."/>
            <person name="Tice H."/>
            <person name="Pitluck S."/>
            <person name="Chertkov O."/>
            <person name="Brettin T."/>
            <person name="Bruce D."/>
            <person name="Han C."/>
            <person name="Tapia R."/>
            <person name="Gilna P."/>
            <person name="Schmutz J."/>
            <person name="Larimer F."/>
            <person name="Land M."/>
            <person name="Hauser L."/>
            <person name="Kyrpides N."/>
            <person name="Kim E."/>
            <person name="Stahl D."/>
            <person name="Richardson P."/>
        </authorList>
    </citation>
    <scope>NUCLEOTIDE SEQUENCE [LARGE SCALE GENOMIC DNA]</scope>
    <source>
        <strain>JS42</strain>
    </source>
</reference>
<name>RISB_ACISJ</name>
<evidence type="ECO:0000255" key="1">
    <source>
        <dbReference type="HAMAP-Rule" id="MF_00178"/>
    </source>
</evidence>
<organism>
    <name type="scientific">Acidovorax sp. (strain JS42)</name>
    <dbReference type="NCBI Taxonomy" id="232721"/>
    <lineage>
        <taxon>Bacteria</taxon>
        <taxon>Pseudomonadati</taxon>
        <taxon>Pseudomonadota</taxon>
        <taxon>Betaproteobacteria</taxon>
        <taxon>Burkholderiales</taxon>
        <taxon>Comamonadaceae</taxon>
        <taxon>Acidovorax</taxon>
    </lineage>
</organism>
<gene>
    <name evidence="1" type="primary">ribH</name>
    <name type="ordered locus">Ajs_2767</name>
</gene>
<protein>
    <recommendedName>
        <fullName evidence="1">6,7-dimethyl-8-ribityllumazine synthase</fullName>
        <shortName evidence="1">DMRL synthase</shortName>
        <shortName evidence="1">LS</shortName>
        <shortName evidence="1">Lumazine synthase</shortName>
        <ecNumber evidence="1">2.5.1.78</ecNumber>
    </recommendedName>
</protein>
<keyword id="KW-0686">Riboflavin biosynthesis</keyword>
<keyword id="KW-0808">Transferase</keyword>
<feature type="chain" id="PRO_1000040358" description="6,7-dimethyl-8-ribityllumazine synthase">
    <location>
        <begin position="1"/>
        <end position="154"/>
    </location>
</feature>
<feature type="active site" description="Proton donor" evidence="1">
    <location>
        <position position="92"/>
    </location>
</feature>
<feature type="binding site" evidence="1">
    <location>
        <position position="26"/>
    </location>
    <ligand>
        <name>5-amino-6-(D-ribitylamino)uracil</name>
        <dbReference type="ChEBI" id="CHEBI:15934"/>
    </ligand>
</feature>
<feature type="binding site" evidence="1">
    <location>
        <begin position="60"/>
        <end position="62"/>
    </location>
    <ligand>
        <name>5-amino-6-(D-ribitylamino)uracil</name>
        <dbReference type="ChEBI" id="CHEBI:15934"/>
    </ligand>
</feature>
<feature type="binding site" evidence="1">
    <location>
        <begin position="84"/>
        <end position="86"/>
    </location>
    <ligand>
        <name>5-amino-6-(D-ribitylamino)uracil</name>
        <dbReference type="ChEBI" id="CHEBI:15934"/>
    </ligand>
</feature>
<feature type="binding site" evidence="1">
    <location>
        <begin position="89"/>
        <end position="90"/>
    </location>
    <ligand>
        <name>(2S)-2-hydroxy-3-oxobutyl phosphate</name>
        <dbReference type="ChEBI" id="CHEBI:58830"/>
    </ligand>
</feature>
<feature type="binding site" evidence="1">
    <location>
        <position position="117"/>
    </location>
    <ligand>
        <name>5-amino-6-(D-ribitylamino)uracil</name>
        <dbReference type="ChEBI" id="CHEBI:15934"/>
    </ligand>
</feature>
<feature type="binding site" evidence="1">
    <location>
        <position position="131"/>
    </location>
    <ligand>
        <name>(2S)-2-hydroxy-3-oxobutyl phosphate</name>
        <dbReference type="ChEBI" id="CHEBI:58830"/>
    </ligand>
</feature>
<dbReference type="EC" id="2.5.1.78" evidence="1"/>
<dbReference type="EMBL" id="CP000539">
    <property type="protein sequence ID" value="ABM42908.1"/>
    <property type="molecule type" value="Genomic_DNA"/>
</dbReference>
<dbReference type="SMR" id="A1W9I3"/>
<dbReference type="STRING" id="232721.Ajs_2767"/>
<dbReference type="KEGG" id="ajs:Ajs_2767"/>
<dbReference type="eggNOG" id="COG0054">
    <property type="taxonomic scope" value="Bacteria"/>
</dbReference>
<dbReference type="HOGENOM" id="CLU_089358_1_2_4"/>
<dbReference type="UniPathway" id="UPA00275">
    <property type="reaction ID" value="UER00404"/>
</dbReference>
<dbReference type="Proteomes" id="UP000000645">
    <property type="component" value="Chromosome"/>
</dbReference>
<dbReference type="GO" id="GO:0005829">
    <property type="term" value="C:cytosol"/>
    <property type="evidence" value="ECO:0007669"/>
    <property type="project" value="TreeGrafter"/>
</dbReference>
<dbReference type="GO" id="GO:0009349">
    <property type="term" value="C:riboflavin synthase complex"/>
    <property type="evidence" value="ECO:0007669"/>
    <property type="project" value="InterPro"/>
</dbReference>
<dbReference type="GO" id="GO:0000906">
    <property type="term" value="F:6,7-dimethyl-8-ribityllumazine synthase activity"/>
    <property type="evidence" value="ECO:0007669"/>
    <property type="project" value="UniProtKB-UniRule"/>
</dbReference>
<dbReference type="GO" id="GO:0009231">
    <property type="term" value="P:riboflavin biosynthetic process"/>
    <property type="evidence" value="ECO:0007669"/>
    <property type="project" value="UniProtKB-UniRule"/>
</dbReference>
<dbReference type="CDD" id="cd09209">
    <property type="entry name" value="Lumazine_synthase-I"/>
    <property type="match status" value="1"/>
</dbReference>
<dbReference type="Gene3D" id="3.40.50.960">
    <property type="entry name" value="Lumazine/riboflavin synthase"/>
    <property type="match status" value="1"/>
</dbReference>
<dbReference type="HAMAP" id="MF_00178">
    <property type="entry name" value="Lumazine_synth"/>
    <property type="match status" value="1"/>
</dbReference>
<dbReference type="InterPro" id="IPR034964">
    <property type="entry name" value="LS"/>
</dbReference>
<dbReference type="InterPro" id="IPR002180">
    <property type="entry name" value="LS/RS"/>
</dbReference>
<dbReference type="InterPro" id="IPR036467">
    <property type="entry name" value="LS/RS_sf"/>
</dbReference>
<dbReference type="NCBIfam" id="TIGR00114">
    <property type="entry name" value="lumazine-synth"/>
    <property type="match status" value="1"/>
</dbReference>
<dbReference type="PANTHER" id="PTHR21058:SF0">
    <property type="entry name" value="6,7-DIMETHYL-8-RIBITYLLUMAZINE SYNTHASE"/>
    <property type="match status" value="1"/>
</dbReference>
<dbReference type="PANTHER" id="PTHR21058">
    <property type="entry name" value="6,7-DIMETHYL-8-RIBITYLLUMAZINE SYNTHASE DMRL SYNTHASE LUMAZINE SYNTHASE"/>
    <property type="match status" value="1"/>
</dbReference>
<dbReference type="Pfam" id="PF00885">
    <property type="entry name" value="DMRL_synthase"/>
    <property type="match status" value="1"/>
</dbReference>
<dbReference type="SUPFAM" id="SSF52121">
    <property type="entry name" value="Lumazine synthase"/>
    <property type="match status" value="1"/>
</dbReference>
<comment type="function">
    <text evidence="1">Catalyzes the formation of 6,7-dimethyl-8-ribityllumazine by condensation of 5-amino-6-(D-ribitylamino)uracil with 3,4-dihydroxy-2-butanone 4-phosphate. This is the penultimate step in the biosynthesis of riboflavin.</text>
</comment>
<comment type="catalytic activity">
    <reaction evidence="1">
        <text>(2S)-2-hydroxy-3-oxobutyl phosphate + 5-amino-6-(D-ribitylamino)uracil = 6,7-dimethyl-8-(1-D-ribityl)lumazine + phosphate + 2 H2O + H(+)</text>
        <dbReference type="Rhea" id="RHEA:26152"/>
        <dbReference type="ChEBI" id="CHEBI:15377"/>
        <dbReference type="ChEBI" id="CHEBI:15378"/>
        <dbReference type="ChEBI" id="CHEBI:15934"/>
        <dbReference type="ChEBI" id="CHEBI:43474"/>
        <dbReference type="ChEBI" id="CHEBI:58201"/>
        <dbReference type="ChEBI" id="CHEBI:58830"/>
        <dbReference type="EC" id="2.5.1.78"/>
    </reaction>
</comment>
<comment type="pathway">
    <text evidence="1">Cofactor biosynthesis; riboflavin biosynthesis; riboflavin from 2-hydroxy-3-oxobutyl phosphate and 5-amino-6-(D-ribitylamino)uracil: step 1/2.</text>
</comment>
<comment type="similarity">
    <text evidence="1">Belongs to the DMRL synthase family.</text>
</comment>